<name>Y901_STAAR</name>
<sequence length="78" mass="8657">MNPIVEFCLSNMAKGGDYVFNQLENDPDVDVLEYGCLTHCGICSAGLYALVNGDIVEGDSPEELLQNIYAHIKETWIF</sequence>
<comment type="similarity">
    <text evidence="1">Belongs to the UPF0349 family.</text>
</comment>
<proteinExistence type="inferred from homology"/>
<evidence type="ECO:0000255" key="1">
    <source>
        <dbReference type="HAMAP-Rule" id="MF_01542"/>
    </source>
</evidence>
<gene>
    <name type="ordered locus">SAR0901</name>
</gene>
<reference key="1">
    <citation type="journal article" date="2004" name="Proc. Natl. Acad. Sci. U.S.A.">
        <title>Complete genomes of two clinical Staphylococcus aureus strains: evidence for the rapid evolution of virulence and drug resistance.</title>
        <authorList>
            <person name="Holden M.T.G."/>
            <person name="Feil E.J."/>
            <person name="Lindsay J.A."/>
            <person name="Peacock S.J."/>
            <person name="Day N.P.J."/>
            <person name="Enright M.C."/>
            <person name="Foster T.J."/>
            <person name="Moore C.E."/>
            <person name="Hurst L."/>
            <person name="Atkin R."/>
            <person name="Barron A."/>
            <person name="Bason N."/>
            <person name="Bentley S.D."/>
            <person name="Chillingworth C."/>
            <person name="Chillingworth T."/>
            <person name="Churcher C."/>
            <person name="Clark L."/>
            <person name="Corton C."/>
            <person name="Cronin A."/>
            <person name="Doggett J."/>
            <person name="Dowd L."/>
            <person name="Feltwell T."/>
            <person name="Hance Z."/>
            <person name="Harris B."/>
            <person name="Hauser H."/>
            <person name="Holroyd S."/>
            <person name="Jagels K."/>
            <person name="James K.D."/>
            <person name="Lennard N."/>
            <person name="Line A."/>
            <person name="Mayes R."/>
            <person name="Moule S."/>
            <person name="Mungall K."/>
            <person name="Ormond D."/>
            <person name="Quail M.A."/>
            <person name="Rabbinowitsch E."/>
            <person name="Rutherford K.M."/>
            <person name="Sanders M."/>
            <person name="Sharp S."/>
            <person name="Simmonds M."/>
            <person name="Stevens K."/>
            <person name="Whitehead S."/>
            <person name="Barrell B.G."/>
            <person name="Spratt B.G."/>
            <person name="Parkhill J."/>
        </authorList>
    </citation>
    <scope>NUCLEOTIDE SEQUENCE [LARGE SCALE GENOMIC DNA]</scope>
    <source>
        <strain>MRSA252</strain>
    </source>
</reference>
<protein>
    <recommendedName>
        <fullName evidence="1">UPF0349 protein SAR0901</fullName>
    </recommendedName>
</protein>
<feature type="chain" id="PRO_0000165897" description="UPF0349 protein SAR0901">
    <location>
        <begin position="1"/>
        <end position="78"/>
    </location>
</feature>
<accession>Q6GIE9</accession>
<dbReference type="EMBL" id="BX571856">
    <property type="protein sequence ID" value="CAG39907.1"/>
    <property type="molecule type" value="Genomic_DNA"/>
</dbReference>
<dbReference type="RefSeq" id="WP_001068337.1">
    <property type="nucleotide sequence ID" value="NC_002952.2"/>
</dbReference>
<dbReference type="SMR" id="Q6GIE9"/>
<dbReference type="KEGG" id="sar:SAR0901"/>
<dbReference type="HOGENOM" id="CLU_182025_0_0_9"/>
<dbReference type="Proteomes" id="UP000000596">
    <property type="component" value="Chromosome"/>
</dbReference>
<dbReference type="HAMAP" id="MF_01542">
    <property type="entry name" value="UPF0349"/>
    <property type="match status" value="1"/>
</dbReference>
<dbReference type="InterPro" id="IPR009910">
    <property type="entry name" value="DUF1450"/>
</dbReference>
<dbReference type="InterPro" id="IPR022916">
    <property type="entry name" value="UPF0349"/>
</dbReference>
<dbReference type="NCBIfam" id="NF010190">
    <property type="entry name" value="PRK13669.1"/>
    <property type="match status" value="1"/>
</dbReference>
<dbReference type="Pfam" id="PF07293">
    <property type="entry name" value="DUF1450"/>
    <property type="match status" value="1"/>
</dbReference>
<organism>
    <name type="scientific">Staphylococcus aureus (strain MRSA252)</name>
    <dbReference type="NCBI Taxonomy" id="282458"/>
    <lineage>
        <taxon>Bacteria</taxon>
        <taxon>Bacillati</taxon>
        <taxon>Bacillota</taxon>
        <taxon>Bacilli</taxon>
        <taxon>Bacillales</taxon>
        <taxon>Staphylococcaceae</taxon>
        <taxon>Staphylococcus</taxon>
    </lineage>
</organism>